<proteinExistence type="evidence at transcript level"/>
<name>PHKG2_BOVIN</name>
<feature type="chain" id="PRO_0000244591" description="Phosphorylase b kinase gamma catalytic chain, liver/testis isoform">
    <location>
        <begin position="1"/>
        <end position="406"/>
    </location>
</feature>
<feature type="domain" description="Protein kinase" evidence="4">
    <location>
        <begin position="24"/>
        <end position="291"/>
    </location>
</feature>
<feature type="region of interest" description="Calmodulin-binding (domain-N)" evidence="1">
    <location>
        <begin position="306"/>
        <end position="330"/>
    </location>
</feature>
<feature type="region of interest" description="Calmodulin-binding (domain-C)" evidence="1">
    <location>
        <begin position="346"/>
        <end position="370"/>
    </location>
</feature>
<feature type="active site" description="Proton acceptor" evidence="4 5">
    <location>
        <position position="153"/>
    </location>
</feature>
<feature type="binding site" evidence="4">
    <location>
        <begin position="30"/>
        <end position="38"/>
    </location>
    <ligand>
        <name>ATP</name>
        <dbReference type="ChEBI" id="CHEBI:30616"/>
    </ligand>
</feature>
<feature type="binding site" evidence="4">
    <location>
        <position position="53"/>
    </location>
    <ligand>
        <name>ATP</name>
        <dbReference type="ChEBI" id="CHEBI:30616"/>
    </ligand>
</feature>
<protein>
    <recommendedName>
        <fullName>Phosphorylase b kinase gamma catalytic chain, liver/testis isoform</fullName>
        <shortName>PHK-gamma-LT</shortName>
        <shortName>PHK-gamma-T</shortName>
        <ecNumber evidence="3">2.7.11.19</ecNumber>
    </recommendedName>
    <alternativeName>
        <fullName>Phosphorylase kinase subunit gamma-2</fullName>
    </alternativeName>
</protein>
<sequence length="406" mass="46542">MTLDVGPEDELPDWAAAKEFYQKYDPKDVIGRGVSSVVRRCVHRATGQEFAVKIMEVTAERLSPEQLEEVREATRRETHILRQVAGHPHIITLIDSYESSSFMFLVFDLMRKGELFDYLTEKVALSEKETRSIMRSLLEAVSFLHNNNIVHRDLKPENILLDDNMQIRLSDFGFSCHLEPGEKLRELCGTPGYLAPEILKCSMDETHPGYGKEVDLWACGVILFTLLAGSPPFWHRRQILMLRMIMEGQYQFSSPEWDDRSDTVKDLISRLLQVDPVERLTAEQALQHPFFERCEGSQAWNLTPRQRFRVAVWTVLAAGRVALSAHRIRPLTKSALLRDPYALRPVRRLIDNCAFRLYGHWVKKGEQQNRAALFQHRPPGPFPMMGPEEEGDSATIAEDEAMLVLG</sequence>
<accession>Q2KJ16</accession>
<accession>A7E3T5</accession>
<dbReference type="EC" id="2.7.11.19" evidence="3"/>
<dbReference type="EMBL" id="BT030706">
    <property type="protein sequence ID" value="ABS45022.1"/>
    <property type="molecule type" value="mRNA"/>
</dbReference>
<dbReference type="EMBL" id="BC105568">
    <property type="protein sequence ID" value="AAI05569.1"/>
    <property type="molecule type" value="mRNA"/>
</dbReference>
<dbReference type="RefSeq" id="NP_001039593.1">
    <property type="nucleotide sequence ID" value="NM_001046128.1"/>
</dbReference>
<dbReference type="RefSeq" id="XP_059737256.1">
    <property type="nucleotide sequence ID" value="XM_059881273.1"/>
</dbReference>
<dbReference type="SMR" id="Q2KJ16"/>
<dbReference type="FunCoup" id="Q2KJ16">
    <property type="interactions" value="4421"/>
</dbReference>
<dbReference type="STRING" id="9913.ENSBTAP00000004433"/>
<dbReference type="PaxDb" id="9913-ENSBTAP00000004433"/>
<dbReference type="Ensembl" id="ENSBTAT00000004433.3">
    <property type="protein sequence ID" value="ENSBTAP00000004433.2"/>
    <property type="gene ID" value="ENSBTAG00000003417.4"/>
</dbReference>
<dbReference type="GeneID" id="512670"/>
<dbReference type="KEGG" id="bta:512670"/>
<dbReference type="CTD" id="5261"/>
<dbReference type="VEuPathDB" id="HostDB:ENSBTAG00000003417"/>
<dbReference type="VGNC" id="VGNC:32834">
    <property type="gene designation" value="PHKG2"/>
</dbReference>
<dbReference type="eggNOG" id="KOG0599">
    <property type="taxonomic scope" value="Eukaryota"/>
</dbReference>
<dbReference type="GeneTree" id="ENSGT00940000160435"/>
<dbReference type="HOGENOM" id="CLU_000288_63_0_1"/>
<dbReference type="InParanoid" id="Q2KJ16"/>
<dbReference type="OMA" id="FPVMGPE"/>
<dbReference type="OrthoDB" id="419455at2759"/>
<dbReference type="TreeFam" id="TF320349"/>
<dbReference type="Reactome" id="R-BTA-70221">
    <property type="pathway name" value="Glycogen breakdown (glycogenolysis)"/>
</dbReference>
<dbReference type="Proteomes" id="UP000009136">
    <property type="component" value="Chromosome 25"/>
</dbReference>
<dbReference type="Bgee" id="ENSBTAG00000003417">
    <property type="expression patterns" value="Expressed in spermatid and 106 other cell types or tissues"/>
</dbReference>
<dbReference type="GO" id="GO:0005737">
    <property type="term" value="C:cytoplasm"/>
    <property type="evidence" value="ECO:0000318"/>
    <property type="project" value="GO_Central"/>
</dbReference>
<dbReference type="GO" id="GO:0005829">
    <property type="term" value="C:cytosol"/>
    <property type="evidence" value="ECO:0007669"/>
    <property type="project" value="Ensembl"/>
</dbReference>
<dbReference type="GO" id="GO:0005964">
    <property type="term" value="C:phosphorylase kinase complex"/>
    <property type="evidence" value="ECO:0000318"/>
    <property type="project" value="GO_Central"/>
</dbReference>
<dbReference type="GO" id="GO:0005524">
    <property type="term" value="F:ATP binding"/>
    <property type="evidence" value="ECO:0007669"/>
    <property type="project" value="UniProtKB-KW"/>
</dbReference>
<dbReference type="GO" id="GO:0005516">
    <property type="term" value="F:calmodulin binding"/>
    <property type="evidence" value="ECO:0007669"/>
    <property type="project" value="UniProtKB-KW"/>
</dbReference>
<dbReference type="GO" id="GO:0004689">
    <property type="term" value="F:phosphorylase kinase activity"/>
    <property type="evidence" value="ECO:0000318"/>
    <property type="project" value="GO_Central"/>
</dbReference>
<dbReference type="GO" id="GO:0005980">
    <property type="term" value="P:glycogen catabolic process"/>
    <property type="evidence" value="ECO:0007669"/>
    <property type="project" value="Ensembl"/>
</dbReference>
<dbReference type="GO" id="GO:0005977">
    <property type="term" value="P:glycogen metabolic process"/>
    <property type="evidence" value="ECO:0000318"/>
    <property type="project" value="GO_Central"/>
</dbReference>
<dbReference type="GO" id="GO:0045819">
    <property type="term" value="P:positive regulation of glycogen catabolic process"/>
    <property type="evidence" value="ECO:0007669"/>
    <property type="project" value="Ensembl"/>
</dbReference>
<dbReference type="GO" id="GO:0007165">
    <property type="term" value="P:signal transduction"/>
    <property type="evidence" value="ECO:0000318"/>
    <property type="project" value="GO_Central"/>
</dbReference>
<dbReference type="CDD" id="cd14181">
    <property type="entry name" value="STKc_PhKG2"/>
    <property type="match status" value="1"/>
</dbReference>
<dbReference type="FunFam" id="3.30.200.20:FF:000138">
    <property type="entry name" value="Phosphorylase b kinase gamma catalytic chain, liver/testis"/>
    <property type="match status" value="1"/>
</dbReference>
<dbReference type="FunFam" id="1.10.510.10:FF:000149">
    <property type="entry name" value="phosphorylase b kinase gamma catalytic chain, liver/testis isoform"/>
    <property type="match status" value="1"/>
</dbReference>
<dbReference type="Gene3D" id="3.30.200.20">
    <property type="entry name" value="Phosphorylase Kinase, domain 1"/>
    <property type="match status" value="1"/>
</dbReference>
<dbReference type="Gene3D" id="1.10.510.10">
    <property type="entry name" value="Transferase(Phosphotransferase) domain 1"/>
    <property type="match status" value="1"/>
</dbReference>
<dbReference type="InterPro" id="IPR011009">
    <property type="entry name" value="Kinase-like_dom_sf"/>
</dbReference>
<dbReference type="InterPro" id="IPR002291">
    <property type="entry name" value="Phosph_kin_gamma"/>
</dbReference>
<dbReference type="InterPro" id="IPR000719">
    <property type="entry name" value="Prot_kinase_dom"/>
</dbReference>
<dbReference type="InterPro" id="IPR017441">
    <property type="entry name" value="Protein_kinase_ATP_BS"/>
</dbReference>
<dbReference type="InterPro" id="IPR008271">
    <property type="entry name" value="Ser/Thr_kinase_AS"/>
</dbReference>
<dbReference type="PANTHER" id="PTHR24347">
    <property type="entry name" value="SERINE/THREONINE-PROTEIN KINASE"/>
    <property type="match status" value="1"/>
</dbReference>
<dbReference type="Pfam" id="PF00069">
    <property type="entry name" value="Pkinase"/>
    <property type="match status" value="1"/>
</dbReference>
<dbReference type="PRINTS" id="PR01049">
    <property type="entry name" value="PHOSPHBKNASE"/>
</dbReference>
<dbReference type="SMART" id="SM00220">
    <property type="entry name" value="S_TKc"/>
    <property type="match status" value="1"/>
</dbReference>
<dbReference type="SUPFAM" id="SSF56112">
    <property type="entry name" value="Protein kinase-like (PK-like)"/>
    <property type="match status" value="1"/>
</dbReference>
<dbReference type="PROSITE" id="PS00107">
    <property type="entry name" value="PROTEIN_KINASE_ATP"/>
    <property type="match status" value="1"/>
</dbReference>
<dbReference type="PROSITE" id="PS50011">
    <property type="entry name" value="PROTEIN_KINASE_DOM"/>
    <property type="match status" value="1"/>
</dbReference>
<dbReference type="PROSITE" id="PS00108">
    <property type="entry name" value="PROTEIN_KINASE_ST"/>
    <property type="match status" value="1"/>
</dbReference>
<organism>
    <name type="scientific">Bos taurus</name>
    <name type="common">Bovine</name>
    <dbReference type="NCBI Taxonomy" id="9913"/>
    <lineage>
        <taxon>Eukaryota</taxon>
        <taxon>Metazoa</taxon>
        <taxon>Chordata</taxon>
        <taxon>Craniata</taxon>
        <taxon>Vertebrata</taxon>
        <taxon>Euteleostomi</taxon>
        <taxon>Mammalia</taxon>
        <taxon>Eutheria</taxon>
        <taxon>Laurasiatheria</taxon>
        <taxon>Artiodactyla</taxon>
        <taxon>Ruminantia</taxon>
        <taxon>Pecora</taxon>
        <taxon>Bovidae</taxon>
        <taxon>Bovinae</taxon>
        <taxon>Bos</taxon>
    </lineage>
</organism>
<gene>
    <name type="primary">PHKG2</name>
</gene>
<comment type="function">
    <text evidence="3">Catalytic subunit of the phosphorylase b kinase (PHK), which mediates the neural and hormonal regulation of glycogen breakdown (glycogenolysis) by phosphorylating and thereby activating glycogen phosphorylase. May regulate glycogeneolysis in the testis. In vitro, phosphorylates PYGM.</text>
</comment>
<comment type="catalytic activity">
    <reaction evidence="3">
        <text>2 ATP + phosphorylase b = 2 ADP + phosphorylase a.</text>
        <dbReference type="EC" id="2.7.11.19"/>
    </reaction>
</comment>
<comment type="subunit">
    <text evidence="2">Hexadecamer of 4 heterotetramers, each composed of alpha, beta, gamma, and delta subunits. Alpha (PHKA1 or PHKA2) and beta (PHKB) are regulatory subunits, gamma (PHKG1 or PHKG2) is the catalytic subunit, and delta is calmodulin.</text>
</comment>
<comment type="similarity">
    <text evidence="6">Belongs to the protein kinase superfamily. CAMK Ser/Thr protein kinase family.</text>
</comment>
<reference key="1">
    <citation type="journal article" date="2005" name="BMC Genomics">
        <title>Characterization of 954 bovine full-CDS cDNA sequences.</title>
        <authorList>
            <person name="Harhay G.P."/>
            <person name="Sonstegard T.S."/>
            <person name="Keele J.W."/>
            <person name="Heaton M.P."/>
            <person name="Clawson M.L."/>
            <person name="Snelling W.M."/>
            <person name="Wiedmann R.T."/>
            <person name="Van Tassell C.P."/>
            <person name="Smith T.P.L."/>
        </authorList>
    </citation>
    <scope>NUCLEOTIDE SEQUENCE [LARGE SCALE MRNA]</scope>
</reference>
<reference key="2">
    <citation type="submission" date="2005-09" db="EMBL/GenBank/DDBJ databases">
        <authorList>
            <consortium name="NIH - Mammalian Gene Collection (MGC) project"/>
        </authorList>
    </citation>
    <scope>NUCLEOTIDE SEQUENCE [LARGE SCALE MRNA]</scope>
    <source>
        <strain>Hereford</strain>
        <tissue>Ascending colon</tissue>
    </source>
</reference>
<keyword id="KW-0067">ATP-binding</keyword>
<keyword id="KW-0112">Calmodulin-binding</keyword>
<keyword id="KW-0119">Carbohydrate metabolism</keyword>
<keyword id="KW-0321">Glycogen metabolism</keyword>
<keyword id="KW-0418">Kinase</keyword>
<keyword id="KW-0547">Nucleotide-binding</keyword>
<keyword id="KW-1185">Reference proteome</keyword>
<keyword id="KW-0723">Serine/threonine-protein kinase</keyword>
<keyword id="KW-0808">Transferase</keyword>
<evidence type="ECO:0000250" key="1"/>
<evidence type="ECO:0000250" key="2">
    <source>
        <dbReference type="UniProtKB" id="P15735"/>
    </source>
</evidence>
<evidence type="ECO:0000250" key="3">
    <source>
        <dbReference type="UniProtKB" id="P31325"/>
    </source>
</evidence>
<evidence type="ECO:0000255" key="4">
    <source>
        <dbReference type="PROSITE-ProRule" id="PRU00159"/>
    </source>
</evidence>
<evidence type="ECO:0000255" key="5">
    <source>
        <dbReference type="PROSITE-ProRule" id="PRU10027"/>
    </source>
</evidence>
<evidence type="ECO:0000305" key="6"/>